<sequence>MEKEIFYDSDGAKIRAFLATPENPKLAVIVIHEIWGLNDNIKDISRRLANEGYMALAPQLYTRNEDVLNEGNIQNVMMKVWSIPPEKRNDPNSYQQIMSALDEKGKKVAELLVLNRQKTEEQMIKDAIKAYEYVSSQGVKKIVSMGFCMGGGLAFQLATEVPLDGTIVFYGRNPQPLEAIQKIKGPILGLYAGEDPPIDAGLPDLISAIIKYKKDLELKIYPGAYHAFFNDRGRSYNKEAAEDAWERVKSFLRRVSK</sequence>
<gene>
    <name type="ordered locus">SSO2087</name>
    <name type="ORF">C06015</name>
    <name type="ORF">C31_045</name>
</gene>
<accession>P95862</accession>
<reference key="1">
    <citation type="journal article" date="1996" name="Mol. Microbiol.">
        <title>Organizational characteristics and information content of an archaeal genome: 156 kb of sequence from Sulfolobus solfataricus P2.</title>
        <authorList>
            <person name="Sensen C.W."/>
            <person name="Klenk H.-P."/>
            <person name="Singh R.K."/>
            <person name="Allard G."/>
            <person name="Chan C.C.-Y."/>
            <person name="Liu Q.Y."/>
            <person name="Penny S.L."/>
            <person name="Young F."/>
            <person name="Schenk M.E."/>
            <person name="Gaasterland T."/>
            <person name="Doolittle W.F."/>
            <person name="Ragan M.A."/>
            <person name="Charlebois R.L."/>
        </authorList>
    </citation>
    <scope>NUCLEOTIDE SEQUENCE [GENOMIC DNA]</scope>
    <source>
        <strain>ATCC 35092 / DSM 1617 / JCM 11322 / P2</strain>
    </source>
</reference>
<reference key="2">
    <citation type="journal article" date="2001" name="Proc. Natl. Acad. Sci. U.S.A.">
        <title>The complete genome of the crenarchaeon Sulfolobus solfataricus P2.</title>
        <authorList>
            <person name="She Q."/>
            <person name="Singh R.K."/>
            <person name="Confalonieri F."/>
            <person name="Zivanovic Y."/>
            <person name="Allard G."/>
            <person name="Awayez M.J."/>
            <person name="Chan-Weiher C.C.-Y."/>
            <person name="Clausen I.G."/>
            <person name="Curtis B.A."/>
            <person name="De Moors A."/>
            <person name="Erauso G."/>
            <person name="Fletcher C."/>
            <person name="Gordon P.M.K."/>
            <person name="Heikamp-de Jong I."/>
            <person name="Jeffries A.C."/>
            <person name="Kozera C.J."/>
            <person name="Medina N."/>
            <person name="Peng X."/>
            <person name="Thi-Ngoc H.P."/>
            <person name="Redder P."/>
            <person name="Schenk M.E."/>
            <person name="Theriault C."/>
            <person name="Tolstrup N."/>
            <person name="Charlebois R.L."/>
            <person name="Doolittle W.F."/>
            <person name="Duguet M."/>
            <person name="Gaasterland T."/>
            <person name="Garrett R.A."/>
            <person name="Ragan M.A."/>
            <person name="Sensen C.W."/>
            <person name="Van der Oost J."/>
        </authorList>
    </citation>
    <scope>NUCLEOTIDE SEQUENCE [LARGE SCALE GENOMIC DNA]</scope>
    <source>
        <strain>ATCC 35092 / DSM 1617 / JCM 11322 / P2</strain>
    </source>
</reference>
<protein>
    <recommendedName>
        <fullName>Putative carboxymethylenebutenolidase</fullName>
        <ecNumber>3.1.1.45</ecNumber>
    </recommendedName>
    <alternativeName>
        <fullName>Dienelactone hydrolase</fullName>
        <shortName>DLH</shortName>
    </alternativeName>
</protein>
<feature type="chain" id="PRO_0000161584" description="Putative carboxymethylenebutenolidase">
    <location>
        <begin position="1"/>
        <end position="257"/>
    </location>
</feature>
<feature type="active site" evidence="1">
    <location>
        <position position="148"/>
    </location>
</feature>
<feature type="active site" evidence="1">
    <location>
        <position position="195"/>
    </location>
</feature>
<feature type="active site" evidence="1">
    <location>
        <position position="226"/>
    </location>
</feature>
<keyword id="KW-0378">Hydrolase</keyword>
<keyword id="KW-1185">Reference proteome</keyword>
<dbReference type="EC" id="3.1.1.45"/>
<dbReference type="EMBL" id="Y08256">
    <property type="protein sequence ID" value="CAA69498.1"/>
    <property type="molecule type" value="Genomic_DNA"/>
</dbReference>
<dbReference type="EMBL" id="AE006641">
    <property type="protein sequence ID" value="AAK42266.1"/>
    <property type="molecule type" value="Genomic_DNA"/>
</dbReference>
<dbReference type="PIR" id="S73082">
    <property type="entry name" value="S73082"/>
</dbReference>
<dbReference type="RefSeq" id="WP_009989796.1">
    <property type="nucleotide sequence ID" value="NC_002754.1"/>
</dbReference>
<dbReference type="SMR" id="P95862"/>
<dbReference type="FunCoup" id="P95862">
    <property type="interactions" value="93"/>
</dbReference>
<dbReference type="STRING" id="273057.SSO2087"/>
<dbReference type="ESTHER" id="sulso-dlhh">
    <property type="family name" value="Dienelactone_hydrolase"/>
</dbReference>
<dbReference type="PaxDb" id="273057-SSO2087"/>
<dbReference type="EnsemblBacteria" id="AAK42266">
    <property type="protein sequence ID" value="AAK42266"/>
    <property type="gene ID" value="SSO2087"/>
</dbReference>
<dbReference type="KEGG" id="sso:SSO2087"/>
<dbReference type="PATRIC" id="fig|273057.12.peg.2165"/>
<dbReference type="eggNOG" id="arCOG01659">
    <property type="taxonomic scope" value="Archaea"/>
</dbReference>
<dbReference type="HOGENOM" id="CLU_054590_7_2_2"/>
<dbReference type="InParanoid" id="P95862"/>
<dbReference type="PhylomeDB" id="P95862"/>
<dbReference type="Proteomes" id="UP000001974">
    <property type="component" value="Chromosome"/>
</dbReference>
<dbReference type="GO" id="GO:0008806">
    <property type="term" value="F:carboxymethylenebutenolidase activity"/>
    <property type="evidence" value="ECO:0007669"/>
    <property type="project" value="UniProtKB-EC"/>
</dbReference>
<dbReference type="Gene3D" id="3.40.50.1820">
    <property type="entry name" value="alpha/beta hydrolase"/>
    <property type="match status" value="1"/>
</dbReference>
<dbReference type="InterPro" id="IPR029058">
    <property type="entry name" value="AB_hydrolase_fold"/>
</dbReference>
<dbReference type="InterPro" id="IPR002925">
    <property type="entry name" value="Dienelactn_hydro"/>
</dbReference>
<dbReference type="InterPro" id="IPR051049">
    <property type="entry name" value="Dienelactone_hydrolase-like"/>
</dbReference>
<dbReference type="PANTHER" id="PTHR46623:SF6">
    <property type="entry name" value="ALPHA_BETA-HYDROLASES SUPERFAMILY PROTEIN"/>
    <property type="match status" value="1"/>
</dbReference>
<dbReference type="PANTHER" id="PTHR46623">
    <property type="entry name" value="CARBOXYMETHYLENEBUTENOLIDASE-RELATED"/>
    <property type="match status" value="1"/>
</dbReference>
<dbReference type="Pfam" id="PF01738">
    <property type="entry name" value="DLH"/>
    <property type="match status" value="1"/>
</dbReference>
<dbReference type="SUPFAM" id="SSF53474">
    <property type="entry name" value="alpha/beta-Hydrolases"/>
    <property type="match status" value="1"/>
</dbReference>
<evidence type="ECO:0000250" key="1"/>
<evidence type="ECO:0000305" key="2"/>
<name>DLHH_SACS2</name>
<organism>
    <name type="scientific">Saccharolobus solfataricus (strain ATCC 35092 / DSM 1617 / JCM 11322 / P2)</name>
    <name type="common">Sulfolobus solfataricus</name>
    <dbReference type="NCBI Taxonomy" id="273057"/>
    <lineage>
        <taxon>Archaea</taxon>
        <taxon>Thermoproteota</taxon>
        <taxon>Thermoprotei</taxon>
        <taxon>Sulfolobales</taxon>
        <taxon>Sulfolobaceae</taxon>
        <taxon>Saccharolobus</taxon>
    </lineage>
</organism>
<comment type="catalytic activity">
    <reaction>
        <text>2-(5-oxo-2,5-dihydrofuran-2-ylidene)acetate + H2O = 4-oxohex-2-enedioate + H(+)</text>
        <dbReference type="Rhea" id="RHEA:12372"/>
        <dbReference type="ChEBI" id="CHEBI:12040"/>
        <dbReference type="ChEBI" id="CHEBI:15377"/>
        <dbReference type="ChEBI" id="CHEBI:15378"/>
        <dbReference type="ChEBI" id="CHEBI:57263"/>
        <dbReference type="EC" id="3.1.1.45"/>
    </reaction>
</comment>
<comment type="similarity">
    <text evidence="2">Belongs to the dienelactone hydrolase family.</text>
</comment>
<proteinExistence type="inferred from homology"/>